<sequence length="51" mass="6090">MRDKIRLVSSAGTGYFYTTTKNKRTMPEKMEIKKFDPKIRQHVIFKEAKIK</sequence>
<gene>
    <name evidence="1" type="primary">rpmG</name>
    <name type="ordered locus">ACICU_00457</name>
</gene>
<protein>
    <recommendedName>
        <fullName evidence="1">Large ribosomal subunit protein bL33</fullName>
    </recommendedName>
    <alternativeName>
        <fullName evidence="2">50S ribosomal protein L33</fullName>
    </alternativeName>
</protein>
<name>RL33_ACIBC</name>
<feature type="chain" id="PRO_0000356361" description="Large ribosomal subunit protein bL33">
    <location>
        <begin position="1"/>
        <end position="51"/>
    </location>
</feature>
<proteinExistence type="inferred from homology"/>
<dbReference type="EMBL" id="CP000863">
    <property type="protein sequence ID" value="ACC55769.1"/>
    <property type="molecule type" value="Genomic_DNA"/>
</dbReference>
<dbReference type="RefSeq" id="WP_001205031.1">
    <property type="nucleotide sequence ID" value="NZ_CP031380.1"/>
</dbReference>
<dbReference type="SMR" id="B2I391"/>
<dbReference type="GeneID" id="97427282"/>
<dbReference type="KEGG" id="abc:ACICU_00457"/>
<dbReference type="HOGENOM" id="CLU_190949_1_1_6"/>
<dbReference type="Proteomes" id="UP000008839">
    <property type="component" value="Chromosome"/>
</dbReference>
<dbReference type="GO" id="GO:0022625">
    <property type="term" value="C:cytosolic large ribosomal subunit"/>
    <property type="evidence" value="ECO:0007669"/>
    <property type="project" value="TreeGrafter"/>
</dbReference>
<dbReference type="GO" id="GO:0003735">
    <property type="term" value="F:structural constituent of ribosome"/>
    <property type="evidence" value="ECO:0007669"/>
    <property type="project" value="InterPro"/>
</dbReference>
<dbReference type="GO" id="GO:0006412">
    <property type="term" value="P:translation"/>
    <property type="evidence" value="ECO:0007669"/>
    <property type="project" value="UniProtKB-UniRule"/>
</dbReference>
<dbReference type="FunFam" id="2.20.28.120:FF:000001">
    <property type="entry name" value="50S ribosomal protein L33"/>
    <property type="match status" value="1"/>
</dbReference>
<dbReference type="Gene3D" id="2.20.28.120">
    <property type="entry name" value="Ribosomal protein L33"/>
    <property type="match status" value="1"/>
</dbReference>
<dbReference type="HAMAP" id="MF_00294">
    <property type="entry name" value="Ribosomal_bL33"/>
    <property type="match status" value="1"/>
</dbReference>
<dbReference type="InterPro" id="IPR001705">
    <property type="entry name" value="Ribosomal_bL33"/>
</dbReference>
<dbReference type="InterPro" id="IPR018264">
    <property type="entry name" value="Ribosomal_bL33_CS"/>
</dbReference>
<dbReference type="InterPro" id="IPR038584">
    <property type="entry name" value="Ribosomal_bL33_sf"/>
</dbReference>
<dbReference type="InterPro" id="IPR011332">
    <property type="entry name" value="Ribosomal_zn-bd"/>
</dbReference>
<dbReference type="NCBIfam" id="NF001860">
    <property type="entry name" value="PRK00595.1"/>
    <property type="match status" value="1"/>
</dbReference>
<dbReference type="NCBIfam" id="TIGR01023">
    <property type="entry name" value="rpmG_bact"/>
    <property type="match status" value="1"/>
</dbReference>
<dbReference type="PANTHER" id="PTHR15238">
    <property type="entry name" value="54S RIBOSOMAL PROTEIN L39, MITOCHONDRIAL"/>
    <property type="match status" value="1"/>
</dbReference>
<dbReference type="PANTHER" id="PTHR15238:SF1">
    <property type="entry name" value="LARGE RIBOSOMAL SUBUNIT PROTEIN BL33M"/>
    <property type="match status" value="1"/>
</dbReference>
<dbReference type="Pfam" id="PF00471">
    <property type="entry name" value="Ribosomal_L33"/>
    <property type="match status" value="1"/>
</dbReference>
<dbReference type="SUPFAM" id="SSF57829">
    <property type="entry name" value="Zn-binding ribosomal proteins"/>
    <property type="match status" value="1"/>
</dbReference>
<dbReference type="PROSITE" id="PS00582">
    <property type="entry name" value="RIBOSOMAL_L33"/>
    <property type="match status" value="1"/>
</dbReference>
<keyword id="KW-0687">Ribonucleoprotein</keyword>
<keyword id="KW-0689">Ribosomal protein</keyword>
<accession>B2I391</accession>
<reference key="1">
    <citation type="journal article" date="2008" name="Antimicrob. Agents Chemother.">
        <title>Whole-genome pyrosequencing of an epidemic multidrug-resistant Acinetobacter baumannii strain belonging to the European clone II group.</title>
        <authorList>
            <person name="Iacono M."/>
            <person name="Villa L."/>
            <person name="Fortini D."/>
            <person name="Bordoni R."/>
            <person name="Imperi F."/>
            <person name="Bonnal R.J."/>
            <person name="Sicheritz-Ponten T."/>
            <person name="De Bellis G."/>
            <person name="Visca P."/>
            <person name="Cassone A."/>
            <person name="Carattoli A."/>
        </authorList>
    </citation>
    <scope>NUCLEOTIDE SEQUENCE [LARGE SCALE GENOMIC DNA]</scope>
    <source>
        <strain>ACICU</strain>
    </source>
</reference>
<comment type="similarity">
    <text evidence="1">Belongs to the bacterial ribosomal protein bL33 family.</text>
</comment>
<organism>
    <name type="scientific">Acinetobacter baumannii (strain ACICU)</name>
    <dbReference type="NCBI Taxonomy" id="405416"/>
    <lineage>
        <taxon>Bacteria</taxon>
        <taxon>Pseudomonadati</taxon>
        <taxon>Pseudomonadota</taxon>
        <taxon>Gammaproteobacteria</taxon>
        <taxon>Moraxellales</taxon>
        <taxon>Moraxellaceae</taxon>
        <taxon>Acinetobacter</taxon>
        <taxon>Acinetobacter calcoaceticus/baumannii complex</taxon>
    </lineage>
</organism>
<evidence type="ECO:0000255" key="1">
    <source>
        <dbReference type="HAMAP-Rule" id="MF_00294"/>
    </source>
</evidence>
<evidence type="ECO:0000305" key="2"/>